<sequence length="378" mass="43485">MDCSFPEGDPAAVCGKRQQFGSRFLSDPARVFHHNAWDNVEWSEEQAAEAERKVQENSTQRVCQEKQADYEINANKYWNNFYKIHENGFFKDRHWLFTEFPELAPSQNHLKNLLSENKRSEVYEYYRSGEDGPDLTIEEQHRCSSVSLGDKTQPPLTEESVTQKLHHLEICANEFPGSSATYRILEVGCGVGNTVFPILQTNNDPSLFVYCCDFSSTAVELVQTNSAYDPSRCFAFVHDLCDEDKSYPMPENSLDVIILIFVLSAIVPDKMQNAINRLSRLLKPGGIMLLRDYGRYDMAQLRFKKGQCLSENFYVRGDGTRVYFFTQDELDTLFTTAGLEKVQNLVDRRLQVNRGKQLTMYRVWIQCKYRKPLGSSTG</sequence>
<accession>Q0P5B2</accession>
<name>METL2_BOVIN</name>
<evidence type="ECO:0000250" key="1">
    <source>
        <dbReference type="UniProtKB" id="Q8BMK1"/>
    </source>
</evidence>
<evidence type="ECO:0000250" key="2">
    <source>
        <dbReference type="UniProtKB" id="Q8TCB7"/>
    </source>
</evidence>
<evidence type="ECO:0000250" key="3">
    <source>
        <dbReference type="UniProtKB" id="Q96IZ6"/>
    </source>
</evidence>
<evidence type="ECO:0000305" key="4"/>
<organism>
    <name type="scientific">Bos taurus</name>
    <name type="common">Bovine</name>
    <dbReference type="NCBI Taxonomy" id="9913"/>
    <lineage>
        <taxon>Eukaryota</taxon>
        <taxon>Metazoa</taxon>
        <taxon>Chordata</taxon>
        <taxon>Craniata</taxon>
        <taxon>Vertebrata</taxon>
        <taxon>Euteleostomi</taxon>
        <taxon>Mammalia</taxon>
        <taxon>Eutheria</taxon>
        <taxon>Laurasiatheria</taxon>
        <taxon>Artiodactyla</taxon>
        <taxon>Ruminantia</taxon>
        <taxon>Pecora</taxon>
        <taxon>Bovidae</taxon>
        <taxon>Bovinae</taxon>
        <taxon>Bos</taxon>
    </lineage>
</organism>
<feature type="chain" id="PRO_0000328846" description="tRNA N(3)-cytidine methyltransferase METTL2">
    <location>
        <begin position="1"/>
        <end position="378"/>
    </location>
</feature>
<feature type="binding site" evidence="2">
    <location>
        <position position="78"/>
    </location>
    <ligand>
        <name>S-adenosyl-L-methionine</name>
        <dbReference type="ChEBI" id="CHEBI:59789"/>
    </ligand>
</feature>
<feature type="binding site" evidence="2">
    <location>
        <position position="82"/>
    </location>
    <ligand>
        <name>S-adenosyl-L-methionine</name>
        <dbReference type="ChEBI" id="CHEBI:59789"/>
    </ligand>
</feature>
<feature type="binding site" evidence="2">
    <location>
        <position position="188"/>
    </location>
    <ligand>
        <name>S-adenosyl-L-methionine</name>
        <dbReference type="ChEBI" id="CHEBI:59789"/>
    </ligand>
</feature>
<feature type="binding site" evidence="2">
    <location>
        <position position="213"/>
    </location>
    <ligand>
        <name>S-adenosyl-L-methionine</name>
        <dbReference type="ChEBI" id="CHEBI:59789"/>
    </ligand>
</feature>
<feature type="binding site" evidence="2">
    <location>
        <position position="239"/>
    </location>
    <ligand>
        <name>S-adenosyl-L-methionine</name>
        <dbReference type="ChEBI" id="CHEBI:59789"/>
    </ligand>
</feature>
<feature type="binding site" evidence="2">
    <location>
        <position position="240"/>
    </location>
    <ligand>
        <name>S-adenosyl-L-methionine</name>
        <dbReference type="ChEBI" id="CHEBI:59789"/>
    </ligand>
</feature>
<feature type="binding site" evidence="2">
    <location>
        <position position="260"/>
    </location>
    <ligand>
        <name>S-adenosyl-L-methionine</name>
        <dbReference type="ChEBI" id="CHEBI:59789"/>
    </ligand>
</feature>
<reference key="1">
    <citation type="submission" date="2006-08" db="EMBL/GenBank/DDBJ databases">
        <authorList>
            <consortium name="NIH - Mammalian Gene Collection (MGC) project"/>
        </authorList>
    </citation>
    <scope>NUCLEOTIDE SEQUENCE [LARGE SCALE MRNA]</scope>
    <source>
        <strain>Hereford</strain>
        <tissue>Fetal cerebellum</tissue>
    </source>
</reference>
<dbReference type="EC" id="2.1.1.-" evidence="1"/>
<dbReference type="EMBL" id="BC120275">
    <property type="protein sequence ID" value="AAI20276.1"/>
    <property type="molecule type" value="mRNA"/>
</dbReference>
<dbReference type="RefSeq" id="NP_001068714.1">
    <property type="nucleotide sequence ID" value="NM_001075246.2"/>
</dbReference>
<dbReference type="SMR" id="Q0P5B2"/>
<dbReference type="FunCoup" id="Q0P5B2">
    <property type="interactions" value="4621"/>
</dbReference>
<dbReference type="STRING" id="9913.ENSBTAP00000012443"/>
<dbReference type="PaxDb" id="9913-ENSBTAP00000012443"/>
<dbReference type="GeneID" id="506221"/>
<dbReference type="KEGG" id="bta:506221"/>
<dbReference type="CTD" id="339175"/>
<dbReference type="VEuPathDB" id="HostDB:ENSBTAG00000009458"/>
<dbReference type="eggNOG" id="KOG2361">
    <property type="taxonomic scope" value="Eukaryota"/>
</dbReference>
<dbReference type="HOGENOM" id="CLU_029724_0_2_1"/>
<dbReference type="InParanoid" id="Q0P5B2"/>
<dbReference type="OMA" id="PAKYWDI"/>
<dbReference type="OrthoDB" id="417697at2759"/>
<dbReference type="TreeFam" id="TF323232"/>
<dbReference type="Proteomes" id="UP000009136">
    <property type="component" value="Chromosome 19"/>
</dbReference>
<dbReference type="Bgee" id="ENSBTAG00000009458">
    <property type="expression patterns" value="Expressed in caput epididymis and 104 other cell types or tissues"/>
</dbReference>
<dbReference type="GO" id="GO:0005737">
    <property type="term" value="C:cytoplasm"/>
    <property type="evidence" value="ECO:0000250"/>
    <property type="project" value="UniProtKB"/>
</dbReference>
<dbReference type="GO" id="GO:0016427">
    <property type="term" value="F:tRNA (cytidine) methyltransferase activity"/>
    <property type="evidence" value="ECO:0000250"/>
    <property type="project" value="UniProtKB"/>
</dbReference>
<dbReference type="GO" id="GO:0052735">
    <property type="term" value="F:tRNA (cytidine-3-)-methyltransferase activity"/>
    <property type="evidence" value="ECO:0000318"/>
    <property type="project" value="GO_Central"/>
</dbReference>
<dbReference type="GO" id="GO:0030488">
    <property type="term" value="P:tRNA methylation"/>
    <property type="evidence" value="ECO:0000250"/>
    <property type="project" value="UniProtKB"/>
</dbReference>
<dbReference type="CDD" id="cd02440">
    <property type="entry name" value="AdoMet_MTases"/>
    <property type="match status" value="1"/>
</dbReference>
<dbReference type="Gene3D" id="3.40.50.150">
    <property type="entry name" value="Vaccinia Virus protein VP39"/>
    <property type="match status" value="1"/>
</dbReference>
<dbReference type="InterPro" id="IPR013217">
    <property type="entry name" value="Methyltransf_12"/>
</dbReference>
<dbReference type="InterPro" id="IPR026113">
    <property type="entry name" value="METTL2/6/8-like"/>
</dbReference>
<dbReference type="InterPro" id="IPR029063">
    <property type="entry name" value="SAM-dependent_MTases_sf"/>
</dbReference>
<dbReference type="PANTHER" id="PTHR22809">
    <property type="entry name" value="METHYLTRANSFERASE-RELATED"/>
    <property type="match status" value="1"/>
</dbReference>
<dbReference type="PANTHER" id="PTHR22809:SF4">
    <property type="entry name" value="TRNA N(3)-METHYLCYTIDINE METHYLTRANSFERASE METTL2A-RELATED"/>
    <property type="match status" value="1"/>
</dbReference>
<dbReference type="Pfam" id="PF08242">
    <property type="entry name" value="Methyltransf_12"/>
    <property type="match status" value="1"/>
</dbReference>
<dbReference type="PIRSF" id="PIRSF037755">
    <property type="entry name" value="Mettl2_prd"/>
    <property type="match status" value="1"/>
</dbReference>
<dbReference type="SUPFAM" id="SSF53335">
    <property type="entry name" value="S-adenosyl-L-methionine-dependent methyltransferases"/>
    <property type="match status" value="1"/>
</dbReference>
<comment type="function">
    <text evidence="3">S-adenosyl-L-methionine-dependent methyltransferase that mediates N(3)-methylcytidine modification of residue 32 of the tRNA anticodon loop of tRNA(Thr)(UGU) and tRNA(Arg)(CCU). N(3)-methylcytidine methylation by METTL2 requires the N6-threonylcarbamoylation of tRNA (t6A37) by the EKC/KEOPS complex as prerequisite.</text>
</comment>
<comment type="catalytic activity">
    <reaction evidence="1">
        <text>cytidine(32) in tRNA(Thr) + S-adenosyl-L-methionine = N(3)-methylcytidine(32) in tRNA(Thr) + S-adenosyl-L-homocysteine + H(+)</text>
        <dbReference type="Rhea" id="RHEA:50960"/>
        <dbReference type="Rhea" id="RHEA-COMP:12850"/>
        <dbReference type="Rhea" id="RHEA-COMP:12852"/>
        <dbReference type="ChEBI" id="CHEBI:15378"/>
        <dbReference type="ChEBI" id="CHEBI:57856"/>
        <dbReference type="ChEBI" id="CHEBI:59789"/>
        <dbReference type="ChEBI" id="CHEBI:74894"/>
        <dbReference type="ChEBI" id="CHEBI:82748"/>
    </reaction>
    <physiologicalReaction direction="left-to-right" evidence="1">
        <dbReference type="Rhea" id="RHEA:50961"/>
    </physiologicalReaction>
</comment>
<comment type="catalytic activity">
    <reaction evidence="1">
        <text>cytidine(32) in tRNA(Arg)(CCU) + S-adenosyl-L-methionine = N(3)-methylcytidine(32) in tRNA(Arg)(CCU) + S-adenosyl-L-homocysteine + H(+)</text>
        <dbReference type="Rhea" id="RHEA:60912"/>
        <dbReference type="Rhea" id="RHEA-COMP:15710"/>
        <dbReference type="Rhea" id="RHEA-COMP:15712"/>
        <dbReference type="ChEBI" id="CHEBI:15378"/>
        <dbReference type="ChEBI" id="CHEBI:57856"/>
        <dbReference type="ChEBI" id="CHEBI:59789"/>
        <dbReference type="ChEBI" id="CHEBI:74894"/>
        <dbReference type="ChEBI" id="CHEBI:82748"/>
    </reaction>
    <physiologicalReaction direction="left-to-right" evidence="1">
        <dbReference type="Rhea" id="RHEA:60913"/>
    </physiologicalReaction>
</comment>
<comment type="subunit">
    <text evidence="3">Monomer. Interacts with DALRD3.</text>
</comment>
<comment type="subcellular location">
    <subcellularLocation>
        <location evidence="3">Cytoplasm</location>
    </subcellularLocation>
</comment>
<comment type="similarity">
    <text evidence="4">Belongs to the methyltransferase superfamily. METL family.</text>
</comment>
<gene>
    <name type="primary">METTL2</name>
</gene>
<keyword id="KW-0963">Cytoplasm</keyword>
<keyword id="KW-0489">Methyltransferase</keyword>
<keyword id="KW-1185">Reference proteome</keyword>
<keyword id="KW-0949">S-adenosyl-L-methionine</keyword>
<keyword id="KW-0808">Transferase</keyword>
<keyword id="KW-0819">tRNA processing</keyword>
<proteinExistence type="evidence at transcript level"/>
<protein>
    <recommendedName>
        <fullName evidence="4">tRNA N(3)-cytidine methyltransferase METTL2</fullName>
        <ecNumber evidence="1">2.1.1.-</ecNumber>
    </recommendedName>
    <alternativeName>
        <fullName>Methyltransferase-like protein 2</fullName>
    </alternativeName>
</protein>